<keyword id="KW-1185">Reference proteome</keyword>
<keyword id="KW-0687">Ribonucleoprotein</keyword>
<keyword id="KW-0689">Ribosomal protein</keyword>
<evidence type="ECO:0000255" key="1">
    <source>
        <dbReference type="HAMAP-Rule" id="MF_00508"/>
    </source>
</evidence>
<evidence type="ECO:0000305" key="2"/>
<dbReference type="EMBL" id="CP000781">
    <property type="protein sequence ID" value="ABS66923.1"/>
    <property type="molecule type" value="Genomic_DNA"/>
</dbReference>
<dbReference type="SMR" id="A7IFY0"/>
<dbReference type="STRING" id="78245.Xaut_1678"/>
<dbReference type="KEGG" id="xau:Xaut_1678"/>
<dbReference type="eggNOG" id="COG0051">
    <property type="taxonomic scope" value="Bacteria"/>
</dbReference>
<dbReference type="HOGENOM" id="CLU_122625_1_3_5"/>
<dbReference type="OrthoDB" id="9804464at2"/>
<dbReference type="PhylomeDB" id="A7IFY0"/>
<dbReference type="Proteomes" id="UP000002417">
    <property type="component" value="Chromosome"/>
</dbReference>
<dbReference type="GO" id="GO:1990904">
    <property type="term" value="C:ribonucleoprotein complex"/>
    <property type="evidence" value="ECO:0007669"/>
    <property type="project" value="UniProtKB-KW"/>
</dbReference>
<dbReference type="GO" id="GO:0005840">
    <property type="term" value="C:ribosome"/>
    <property type="evidence" value="ECO:0007669"/>
    <property type="project" value="UniProtKB-KW"/>
</dbReference>
<dbReference type="GO" id="GO:0003735">
    <property type="term" value="F:structural constituent of ribosome"/>
    <property type="evidence" value="ECO:0007669"/>
    <property type="project" value="InterPro"/>
</dbReference>
<dbReference type="GO" id="GO:0000049">
    <property type="term" value="F:tRNA binding"/>
    <property type="evidence" value="ECO:0007669"/>
    <property type="project" value="UniProtKB-UniRule"/>
</dbReference>
<dbReference type="GO" id="GO:0006412">
    <property type="term" value="P:translation"/>
    <property type="evidence" value="ECO:0007669"/>
    <property type="project" value="UniProtKB-UniRule"/>
</dbReference>
<dbReference type="FunFam" id="3.30.70.600:FF:000001">
    <property type="entry name" value="30S ribosomal protein S10"/>
    <property type="match status" value="1"/>
</dbReference>
<dbReference type="Gene3D" id="3.30.70.600">
    <property type="entry name" value="Ribosomal protein S10 domain"/>
    <property type="match status" value="1"/>
</dbReference>
<dbReference type="HAMAP" id="MF_00508">
    <property type="entry name" value="Ribosomal_uS10"/>
    <property type="match status" value="1"/>
</dbReference>
<dbReference type="InterPro" id="IPR001848">
    <property type="entry name" value="Ribosomal_uS10"/>
</dbReference>
<dbReference type="InterPro" id="IPR018268">
    <property type="entry name" value="Ribosomal_uS10_CS"/>
</dbReference>
<dbReference type="InterPro" id="IPR027486">
    <property type="entry name" value="Ribosomal_uS10_dom"/>
</dbReference>
<dbReference type="InterPro" id="IPR036838">
    <property type="entry name" value="Ribosomal_uS10_dom_sf"/>
</dbReference>
<dbReference type="NCBIfam" id="NF001861">
    <property type="entry name" value="PRK00596.1"/>
    <property type="match status" value="1"/>
</dbReference>
<dbReference type="NCBIfam" id="TIGR01049">
    <property type="entry name" value="rpsJ_bact"/>
    <property type="match status" value="1"/>
</dbReference>
<dbReference type="PANTHER" id="PTHR11700">
    <property type="entry name" value="30S RIBOSOMAL PROTEIN S10 FAMILY MEMBER"/>
    <property type="match status" value="1"/>
</dbReference>
<dbReference type="Pfam" id="PF00338">
    <property type="entry name" value="Ribosomal_S10"/>
    <property type="match status" value="1"/>
</dbReference>
<dbReference type="PRINTS" id="PR00971">
    <property type="entry name" value="RIBOSOMALS10"/>
</dbReference>
<dbReference type="SMART" id="SM01403">
    <property type="entry name" value="Ribosomal_S10"/>
    <property type="match status" value="1"/>
</dbReference>
<dbReference type="SUPFAM" id="SSF54999">
    <property type="entry name" value="Ribosomal protein S10"/>
    <property type="match status" value="1"/>
</dbReference>
<dbReference type="PROSITE" id="PS00361">
    <property type="entry name" value="RIBOSOMAL_S10"/>
    <property type="match status" value="1"/>
</dbReference>
<name>RS10_XANP2</name>
<proteinExistence type="inferred from homology"/>
<gene>
    <name evidence="1" type="primary">rpsJ</name>
    <name type="ordered locus">Xaut_1678</name>
</gene>
<protein>
    <recommendedName>
        <fullName evidence="1">Small ribosomal subunit protein uS10</fullName>
    </recommendedName>
    <alternativeName>
        <fullName evidence="2">30S ribosomal protein S10</fullName>
    </alternativeName>
</protein>
<reference key="1">
    <citation type="submission" date="2007-07" db="EMBL/GenBank/DDBJ databases">
        <title>Complete sequence of chromosome of Xanthobacter autotrophicus Py2.</title>
        <authorList>
            <consortium name="US DOE Joint Genome Institute"/>
            <person name="Copeland A."/>
            <person name="Lucas S."/>
            <person name="Lapidus A."/>
            <person name="Barry K."/>
            <person name="Glavina del Rio T."/>
            <person name="Hammon N."/>
            <person name="Israni S."/>
            <person name="Dalin E."/>
            <person name="Tice H."/>
            <person name="Pitluck S."/>
            <person name="Sims D."/>
            <person name="Brettin T."/>
            <person name="Bruce D."/>
            <person name="Detter J.C."/>
            <person name="Han C."/>
            <person name="Tapia R."/>
            <person name="Brainard J."/>
            <person name="Schmutz J."/>
            <person name="Larimer F."/>
            <person name="Land M."/>
            <person name="Hauser L."/>
            <person name="Kyrpides N."/>
            <person name="Kim E."/>
            <person name="Ensigns S.A."/>
            <person name="Richardson P."/>
        </authorList>
    </citation>
    <scope>NUCLEOTIDE SEQUENCE [LARGE SCALE GENOMIC DNA]</scope>
    <source>
        <strain>ATCC BAA-1158 / Py2</strain>
    </source>
</reference>
<feature type="chain" id="PRO_1000127206" description="Small ribosomal subunit protein uS10">
    <location>
        <begin position="1"/>
        <end position="102"/>
    </location>
</feature>
<organism>
    <name type="scientific">Xanthobacter autotrophicus (strain ATCC BAA-1158 / Py2)</name>
    <dbReference type="NCBI Taxonomy" id="78245"/>
    <lineage>
        <taxon>Bacteria</taxon>
        <taxon>Pseudomonadati</taxon>
        <taxon>Pseudomonadota</taxon>
        <taxon>Alphaproteobacteria</taxon>
        <taxon>Hyphomicrobiales</taxon>
        <taxon>Xanthobacteraceae</taxon>
        <taxon>Xanthobacter</taxon>
    </lineage>
</organism>
<sequence length="102" mass="11610">MNGQNIRIRLKAFDHRILDASTREIVATAKRTGAQVRGPIPLPTRIEKFTVNRSPHIDKKSREQFEMRTHKRLLDIVDPTPQTVDALMKLDLAAGVDVEIKL</sequence>
<accession>A7IFY0</accession>
<comment type="function">
    <text evidence="1">Involved in the binding of tRNA to the ribosomes.</text>
</comment>
<comment type="subunit">
    <text evidence="1">Part of the 30S ribosomal subunit.</text>
</comment>
<comment type="similarity">
    <text evidence="1">Belongs to the universal ribosomal protein uS10 family.</text>
</comment>